<feature type="chain" id="PRO_1000075534" description="Sugar fermentation stimulation protein homolog">
    <location>
        <begin position="1"/>
        <end position="238"/>
    </location>
</feature>
<accession>A9M5U3</accession>
<comment type="similarity">
    <text evidence="1">Belongs to the SfsA family.</text>
</comment>
<dbReference type="EMBL" id="CP000872">
    <property type="protein sequence ID" value="ABX62348.1"/>
    <property type="molecule type" value="Genomic_DNA"/>
</dbReference>
<dbReference type="RefSeq" id="WP_002964399.1">
    <property type="nucleotide sequence ID" value="NC_010103.1"/>
</dbReference>
<dbReference type="SMR" id="A9M5U3"/>
<dbReference type="GeneID" id="97533485"/>
<dbReference type="KEGG" id="bcs:BCAN_A1304"/>
<dbReference type="HOGENOM" id="CLU_052299_2_0_5"/>
<dbReference type="PhylomeDB" id="A9M5U3"/>
<dbReference type="Proteomes" id="UP000001385">
    <property type="component" value="Chromosome I"/>
</dbReference>
<dbReference type="GO" id="GO:0003677">
    <property type="term" value="F:DNA binding"/>
    <property type="evidence" value="ECO:0007669"/>
    <property type="project" value="InterPro"/>
</dbReference>
<dbReference type="CDD" id="cd22359">
    <property type="entry name" value="SfsA-like_bacterial"/>
    <property type="match status" value="1"/>
</dbReference>
<dbReference type="Gene3D" id="2.40.50.580">
    <property type="match status" value="1"/>
</dbReference>
<dbReference type="Gene3D" id="3.40.1350.60">
    <property type="match status" value="1"/>
</dbReference>
<dbReference type="HAMAP" id="MF_00095">
    <property type="entry name" value="SfsA"/>
    <property type="match status" value="1"/>
</dbReference>
<dbReference type="InterPro" id="IPR005224">
    <property type="entry name" value="SfsA"/>
</dbReference>
<dbReference type="InterPro" id="IPR040452">
    <property type="entry name" value="SfsA_C"/>
</dbReference>
<dbReference type="InterPro" id="IPR041465">
    <property type="entry name" value="SfsA_N"/>
</dbReference>
<dbReference type="NCBIfam" id="TIGR00230">
    <property type="entry name" value="sfsA"/>
    <property type="match status" value="1"/>
</dbReference>
<dbReference type="PANTHER" id="PTHR30545">
    <property type="entry name" value="SUGAR FERMENTATION STIMULATION PROTEIN A"/>
    <property type="match status" value="1"/>
</dbReference>
<dbReference type="PANTHER" id="PTHR30545:SF2">
    <property type="entry name" value="SUGAR FERMENTATION STIMULATION PROTEIN A"/>
    <property type="match status" value="1"/>
</dbReference>
<dbReference type="Pfam" id="PF03749">
    <property type="entry name" value="SfsA"/>
    <property type="match status" value="1"/>
</dbReference>
<dbReference type="Pfam" id="PF17746">
    <property type="entry name" value="SfsA_N"/>
    <property type="match status" value="1"/>
</dbReference>
<gene>
    <name evidence="1" type="primary">sfsA</name>
    <name type="ordered locus">BCAN_A1304</name>
</gene>
<keyword id="KW-1185">Reference proteome</keyword>
<proteinExistence type="inferred from homology"/>
<name>SFSA_BRUC2</name>
<sequence>MLFPTPLISGRLERRYKRFLADVTLDDGRFITASVPNTGSMLGLTAPGSRVWLSFSDAPHRKYAHTLQIVEADNTLVGVNTGLPNRIAEEAILKGLIPDLDGYATLKREQKYGRNSRIDLLLDDGPRPRAYVEVKNVHFIRTPGLAEFPDTVTARGAKHLDELVDVVAAGHRGIMLFIIQRADCSRFGISGDLDPFYARAFERAIASGVEAWAVRCHITENGIDATELVPIEDMRRIE</sequence>
<evidence type="ECO:0000255" key="1">
    <source>
        <dbReference type="HAMAP-Rule" id="MF_00095"/>
    </source>
</evidence>
<reference key="1">
    <citation type="submission" date="2007-10" db="EMBL/GenBank/DDBJ databases">
        <title>Brucella canis ATCC 23365 whole genome shotgun sequencing project.</title>
        <authorList>
            <person name="Setubal J.C."/>
            <person name="Bowns C."/>
            <person name="Boyle S."/>
            <person name="Crasta O.R."/>
            <person name="Czar M.J."/>
            <person name="Dharmanolla C."/>
            <person name="Gillespie J.J."/>
            <person name="Kenyon R.W."/>
            <person name="Lu J."/>
            <person name="Mane S."/>
            <person name="Mohapatra S."/>
            <person name="Nagrani S."/>
            <person name="Purkayastha A."/>
            <person name="Rajasimha H.K."/>
            <person name="Shallom J.M."/>
            <person name="Shallom S."/>
            <person name="Shukla M."/>
            <person name="Snyder E.E."/>
            <person name="Sobral B.W."/>
            <person name="Wattam A.R."/>
            <person name="Will R."/>
            <person name="Williams K."/>
            <person name="Yoo H."/>
            <person name="Bruce D."/>
            <person name="Detter C."/>
            <person name="Munk C."/>
            <person name="Brettin T.S."/>
        </authorList>
    </citation>
    <scope>NUCLEOTIDE SEQUENCE [LARGE SCALE GENOMIC DNA]</scope>
    <source>
        <strain>ATCC 23365 / NCTC 10854 / RM-666</strain>
    </source>
</reference>
<protein>
    <recommendedName>
        <fullName evidence="1">Sugar fermentation stimulation protein homolog</fullName>
    </recommendedName>
</protein>
<organism>
    <name type="scientific">Brucella canis (strain ATCC 23365 / NCTC 10854 / RM-666)</name>
    <dbReference type="NCBI Taxonomy" id="483179"/>
    <lineage>
        <taxon>Bacteria</taxon>
        <taxon>Pseudomonadati</taxon>
        <taxon>Pseudomonadota</taxon>
        <taxon>Alphaproteobacteria</taxon>
        <taxon>Hyphomicrobiales</taxon>
        <taxon>Brucellaceae</taxon>
        <taxon>Brucella/Ochrobactrum group</taxon>
        <taxon>Brucella</taxon>
    </lineage>
</organism>